<sequence>MMNPRRLPPLPSSTSSASAADDMDPRVWRRLPQPLVDRILACLPTPSFLRLRAACRRFYHLLFSSPFLHSHLLLSPHLPFFAFVVPAAGHLLLLDPTATASWSRLPLPLPPVAGGPAAFSPAAASAGLLAFLSDASGHKTLLLANPITRLLAALPISPTPRLSPTVGLAAGPTSIIAVVAGDDLVSPFAVKNISADTFVADAASVPPSGFWAPSSLLPRLSSLDPRAGMAFASGRFYCMSSSPFAVLVFDVAENVWSKVQPPMRRFLRSPALVELGGGREGAARVALVSAVEKSRLSVPRSVRLWTLRGGGGGGGGGAWTEVARMPPEVHAQFAAAEGGRGFECAAHGDYVVLAPRGPVAQAPTSALVFDSRRDEWRWAPPCPYVVVAHHGGAGAAGFRVFAYEPRLATPAIGLLDATAPVALHGMHDG</sequence>
<accession>Q655Y0</accession>
<proteinExistence type="evidence at protein level"/>
<protein>
    <recommendedName>
        <fullName evidence="17 22">Protein ABERRANT PANICLE ORGANIZATION 1</fullName>
    </recommendedName>
    <alternativeName>
        <fullName evidence="21">F-box protein 0393</fullName>
        <shortName evidence="21">Os_F0393</shortName>
    </alternativeName>
    <alternativeName>
        <fullName evidence="18">F-box protein 321</fullName>
        <shortName evidence="18">OsFbox321</shortName>
    </alternativeName>
    <alternativeName>
        <fullName evidence="19">Protein PRIMARY BRANCH NUMBER ON CHROMOSOME 6</fullName>
    </alternativeName>
    <alternativeName>
        <fullName evidence="20">Protein STRONG CULM 2</fullName>
    </alternativeName>
</protein>
<dbReference type="EMBL" id="AB292777">
    <property type="protein sequence ID" value="BAF75467.1"/>
    <property type="molecule type" value="Genomic_DNA"/>
</dbReference>
<dbReference type="EMBL" id="AP003628">
    <property type="protein sequence ID" value="BAD45387.1"/>
    <property type="molecule type" value="Genomic_DNA"/>
</dbReference>
<dbReference type="EMBL" id="AP014962">
    <property type="protein sequence ID" value="BAS99029.1"/>
    <property type="molecule type" value="Genomic_DNA"/>
</dbReference>
<dbReference type="RefSeq" id="XP_015642415.1">
    <property type="nucleotide sequence ID" value="XM_015786929.1"/>
</dbReference>
<dbReference type="SMR" id="Q655Y0"/>
<dbReference type="FunCoup" id="Q655Y0">
    <property type="interactions" value="2587"/>
</dbReference>
<dbReference type="STRING" id="39947.Q655Y0"/>
<dbReference type="PaxDb" id="39947-Q655Y0"/>
<dbReference type="EnsemblPlants" id="Os06t0665400-01">
    <property type="protein sequence ID" value="Os06t0665400-01"/>
    <property type="gene ID" value="Os06g0665400"/>
</dbReference>
<dbReference type="GeneID" id="107277138"/>
<dbReference type="Gramene" id="Os06t0665400-01">
    <property type="protein sequence ID" value="Os06t0665400-01"/>
    <property type="gene ID" value="Os06g0665400"/>
</dbReference>
<dbReference type="KEGG" id="osa:107277138"/>
<dbReference type="eggNOG" id="ENOG502QR12">
    <property type="taxonomic scope" value="Eukaryota"/>
</dbReference>
<dbReference type="HOGENOM" id="CLU_038778_2_1_1"/>
<dbReference type="InParanoid" id="Q655Y0"/>
<dbReference type="OMA" id="FHIDAGG"/>
<dbReference type="UniPathway" id="UPA00143"/>
<dbReference type="Proteomes" id="UP000000763">
    <property type="component" value="Chromosome 6"/>
</dbReference>
<dbReference type="Proteomes" id="UP000059680">
    <property type="component" value="Chromosome 6"/>
</dbReference>
<dbReference type="GO" id="GO:0016020">
    <property type="term" value="C:membrane"/>
    <property type="evidence" value="ECO:0007669"/>
    <property type="project" value="UniProtKB-SubCell"/>
</dbReference>
<dbReference type="GO" id="GO:0000151">
    <property type="term" value="C:ubiquitin ligase complex"/>
    <property type="evidence" value="ECO:0000318"/>
    <property type="project" value="GO_Central"/>
</dbReference>
<dbReference type="GO" id="GO:0004842">
    <property type="term" value="F:ubiquitin-protein transferase activity"/>
    <property type="evidence" value="ECO:0000318"/>
    <property type="project" value="GO_Central"/>
</dbReference>
<dbReference type="GO" id="GO:0030154">
    <property type="term" value="P:cell differentiation"/>
    <property type="evidence" value="ECO:0000315"/>
    <property type="project" value="UniProtKB"/>
</dbReference>
<dbReference type="GO" id="GO:0009908">
    <property type="term" value="P:flower development"/>
    <property type="evidence" value="ECO:0007669"/>
    <property type="project" value="UniProtKB-KW"/>
</dbReference>
<dbReference type="GO" id="GO:0010074">
    <property type="term" value="P:maintenance of meristem identity"/>
    <property type="evidence" value="ECO:0000315"/>
    <property type="project" value="UniProtKB"/>
</dbReference>
<dbReference type="GO" id="GO:0016567">
    <property type="term" value="P:protein ubiquitination"/>
    <property type="evidence" value="ECO:0007669"/>
    <property type="project" value="UniProtKB-UniPathway"/>
</dbReference>
<dbReference type="GO" id="GO:0042127">
    <property type="term" value="P:regulation of cell population proliferation"/>
    <property type="evidence" value="ECO:0000315"/>
    <property type="project" value="UniProtKB"/>
</dbReference>
<dbReference type="GO" id="GO:0006355">
    <property type="term" value="P:regulation of DNA-templated transcription"/>
    <property type="evidence" value="ECO:0000315"/>
    <property type="project" value="UniProtKB"/>
</dbReference>
<dbReference type="GO" id="GO:0009909">
    <property type="term" value="P:regulation of flower development"/>
    <property type="evidence" value="ECO:0000315"/>
    <property type="project" value="UniProtKB"/>
</dbReference>
<dbReference type="GO" id="GO:1901342">
    <property type="term" value="P:regulation of vasculature development"/>
    <property type="evidence" value="ECO:0000315"/>
    <property type="project" value="UniProtKB"/>
</dbReference>
<dbReference type="GO" id="GO:0010193">
    <property type="term" value="P:response to ozone"/>
    <property type="evidence" value="ECO:0000314"/>
    <property type="project" value="UniProtKB"/>
</dbReference>
<dbReference type="GO" id="GO:0031146">
    <property type="term" value="P:SCF-dependent proteasomal ubiquitin-dependent protein catabolic process"/>
    <property type="evidence" value="ECO:0000318"/>
    <property type="project" value="GO_Central"/>
</dbReference>
<dbReference type="Gene3D" id="1.20.1280.50">
    <property type="match status" value="1"/>
</dbReference>
<dbReference type="InterPro" id="IPR036047">
    <property type="entry name" value="F-box-like_dom_sf"/>
</dbReference>
<dbReference type="InterPro" id="IPR001810">
    <property type="entry name" value="F-box_dom"/>
</dbReference>
<dbReference type="InterPro" id="IPR011043">
    <property type="entry name" value="Gal_Oxase/kelch_b-propeller"/>
</dbReference>
<dbReference type="InterPro" id="IPR050796">
    <property type="entry name" value="SCF_F-box_component"/>
</dbReference>
<dbReference type="PANTHER" id="PTHR31672">
    <property type="entry name" value="BNACNNG10540D PROTEIN"/>
    <property type="match status" value="1"/>
</dbReference>
<dbReference type="PANTHER" id="PTHR31672:SF12">
    <property type="entry name" value="F-BOX DOMAIN-CONTAINING PROTEIN"/>
    <property type="match status" value="1"/>
</dbReference>
<dbReference type="Pfam" id="PF00646">
    <property type="entry name" value="F-box"/>
    <property type="match status" value="1"/>
</dbReference>
<dbReference type="SMART" id="SM00256">
    <property type="entry name" value="FBOX"/>
    <property type="match status" value="1"/>
</dbReference>
<dbReference type="SUPFAM" id="SSF81383">
    <property type="entry name" value="F-box domain"/>
    <property type="match status" value="1"/>
</dbReference>
<dbReference type="SUPFAM" id="SSF50965">
    <property type="entry name" value="Galactose oxidase, central domain"/>
    <property type="match status" value="1"/>
</dbReference>
<dbReference type="PROSITE" id="PS50181">
    <property type="entry name" value="FBOX"/>
    <property type="match status" value="1"/>
</dbReference>
<comment type="function">
    <text evidence="2 6 8 9 10 11 12 13 14 15 16">Component of SCF(ASK-cullin-F-box) E3 ubiquitin ligase complexes, which may mediate the ubiquitination and subsequent proteasomal degradation of target proteins (By similarity). Together with FL/APO2, involved in the temporal regulation of meristem identity during both vegetative and reproductive developments in an APO2-dependent manner (PubMed:15950602, PubMed:17666027, PubMed:19386809, PubMed:21910771, Ref.5, Ref.6). Promotes spikelet formation by suppressing the precocious conversion of inflorescence meristems to spikelet meristems, probably via a positive regulation of class-C floral homeotic genes, but not of class-B genes, and through the control of cell proliferation in meristems (PubMed:17666027, PubMed:19386809, PubMed:21119645, Ref.6). Mediates culm development and strength/diameter enhancement at internodes (PubMed:21119645, PubMed:25381289). Required for the regulation of the plastochron, floral organ identity, and floral determinacy (PubMed:15950602, PubMed:17666027, PubMed:19386809, Ref.6). Controls the number of primary rachis branches (PRBs) (PubMed:20151298). May trigger the formation of vascular bundle systems which, consequently, promote carbohydrate translocation to panicles (PubMed:20151298). Involved in ozone-induced grain yield regulation (PubMed:25923431).</text>
</comment>
<comment type="pathway">
    <text evidence="23">Protein modification; protein ubiquitination.</text>
</comment>
<comment type="subunit">
    <text evidence="1 12">Part of a putative SCF (ASK/Cullin/F-box) ubiquitin ligase complex (By similarity). Interacts with FL/APO2 (PubMed:21910771).</text>
</comment>
<comment type="subcellular location">
    <subcellularLocation>
        <location evidence="3">Membrane</location>
        <topology evidence="3">Multi-pass membrane protein</topology>
    </subcellularLocation>
</comment>
<comment type="tissue specificity">
    <text evidence="7 8 10">Expressed in apical meristems and the lateral organ primordia throughout development (PubMed:17666027). Expressed in seedlings, roots, leaves, shoot apical meristem (SAM), developing panicles, and, at lower levels, in developing seeds (PubMed:17293439, PubMed:20151298).</text>
</comment>
<comment type="developmental stage">
    <text evidence="8 10">Present in the developing vascular bundle systems (PubMed:20151298). In the vegetative phase, expressed in shoot apical meristems (SAM) and leaf primordia (P1-P4 stage) (PubMed:17666027). In the reproductive phase, first observed in the outer several cell layers of the rachis meristem and primary branch meristems (PubMed:17666027, PubMed:20151298). Confined to panicles primodia and young panicles, particularly in the developing rachis branches (PubMed:20151298). Accumulates later in the primary and secondary branch meristems, and in the spikelet and floral meristems (PubMed:17666027). Also expressed in lateral organs of spikelet and floral meristems, such as glumes, lodicules, stamens and carpel, and in the ovule primordium (PubMed:17666027).</text>
</comment>
<comment type="induction">
    <text evidence="14">Induced by ozone.</text>
</comment>
<comment type="domain">
    <text evidence="23">The F-box is necessary for the interaction with ASK proteins.</text>
</comment>
<comment type="disruption phenotype">
    <text evidence="6 8 10 12 15 16">Reduced expression of class-C genes (PubMed:15950602, Ref.6). Several abnormal phenotypes in the vegetative and reproductive phases including accelerated leaves growth, aberrant panicle distichous phyllotaxy organization and disturbed floral organ identity (PubMed:15950602, PubMed:17666027, PubMed:21910771, Ref.5, Ref.6). Aberrant conversion of rachis meristem to a spikelet meristem after producing several primary branch primordia (PubMed:15950602, PubMed:17666027, Ref.5, Ref.6). In flowers, frequent replacement of stamens with lodicules (petals), and indeterminate production of carpels (PubMed:15950602, PubMed:17666027, Ref.6). Precocious formation of spikelet meristems and prolonged formation of lodicules and carpels (PubMed:15950602, PubMed:17666027, Ref.6). Reduced number of primary rachis branches (PRBs) and of the number of grains per panicle, thus leading to reduced grain yield (PubMed:20151298).</text>
</comment>
<comment type="miscellaneous">
    <text evidence="14">Ozone has various impact on different cultivars; O.sativa subsp. japonica cv. Sasanishiki exhibits ozone-induced leaf injury, but no grain yield loss, and, by contrast, O.sativa subsp. indica cv. Habataki has grain yield loss with minimal leaf injury upon ozone treatment.</text>
</comment>
<comment type="miscellaneous">
    <text evidence="10">Plants harboring the PBN6 quantitative trait locus (QTL) (e.g. HI1 allele in O.sativa subsp. indica cv. Habataki) exhibit bigger peduncle diameter due to larger vascular bundles and an increased number of primary rachis branches (PRBs) and of the number of grains per panicle, thus leading to increased grain yield.</text>
</comment>
<comment type="miscellaneous">
    <text evidence="11">Plants harboring the SCM2 quantitative trait locus (QTL) exhibit both an enhancement of culm strength at internodes and an increased spikelet number leading to higher crop productivity and better grain yield.</text>
</comment>
<gene>
    <name evidence="17 22" type="primary">APO1</name>
    <name evidence="21" type="synonym">F0393</name>
    <name evidence="18" type="synonym">FBOX321</name>
    <name evidence="19" type="synonym">PBN6</name>
    <name evidence="20" type="synonym">SCM2</name>
    <name evidence="25" type="ordered locus">Os06g0665400</name>
    <name evidence="23" type="ordered locus">LOC_Os06g45460</name>
    <name evidence="25" type="ORF">OSNPB_060665400</name>
    <name evidence="24" type="ORF">P0473H04.19</name>
</gene>
<reference key="1">
    <citation type="journal article" date="2007" name="Plant J.">
        <title>Rice ABERRANT PANICLE ORGANIZATION 1, encoding an F-box protein, regulates meristem fate.</title>
        <authorList>
            <person name="Ikeda K."/>
            <person name="Ito M."/>
            <person name="Nagasawa N."/>
            <person name="Kyozuka J."/>
            <person name="Nagato Y."/>
        </authorList>
    </citation>
    <scope>NUCLEOTIDE SEQUENCE [GENOMIC DNA]</scope>
    <scope>FUNCTION</scope>
    <scope>DISRUPTION PHENOTYPE</scope>
    <scope>TISSUE SPECIFICITY</scope>
    <scope>DEVELOPMENTAL STAGE</scope>
    <source>
        <strain>cv. Nipponbare</strain>
    </source>
</reference>
<reference key="2">
    <citation type="journal article" date="2005" name="Nature">
        <title>The map-based sequence of the rice genome.</title>
        <authorList>
            <consortium name="International rice genome sequencing project (IRGSP)"/>
        </authorList>
    </citation>
    <scope>NUCLEOTIDE SEQUENCE [LARGE SCALE GENOMIC DNA]</scope>
    <source>
        <strain>cv. Nipponbare</strain>
    </source>
</reference>
<reference key="3">
    <citation type="journal article" date="2008" name="Nucleic Acids Res.">
        <title>The rice annotation project database (RAP-DB): 2008 update.</title>
        <authorList>
            <consortium name="The rice annotation project (RAP)"/>
        </authorList>
    </citation>
    <scope>GENOME REANNOTATION</scope>
    <source>
        <strain>cv. Nipponbare</strain>
    </source>
</reference>
<reference key="4">
    <citation type="journal article" date="2013" name="Rice">
        <title>Improvement of the Oryza sativa Nipponbare reference genome using next generation sequence and optical map data.</title>
        <authorList>
            <person name="Kawahara Y."/>
            <person name="de la Bastide M."/>
            <person name="Hamilton J.P."/>
            <person name="Kanamori H."/>
            <person name="McCombie W.R."/>
            <person name="Ouyang S."/>
            <person name="Schwartz D.C."/>
            <person name="Tanaka T."/>
            <person name="Wu J."/>
            <person name="Zhou S."/>
            <person name="Childs K.L."/>
            <person name="Davidson R.M."/>
            <person name="Lin H."/>
            <person name="Quesada-Ocampo L."/>
            <person name="Vaillancourt B."/>
            <person name="Sakai H."/>
            <person name="Lee S.S."/>
            <person name="Kim J."/>
            <person name="Numa H."/>
            <person name="Itoh T."/>
            <person name="Buell C.R."/>
            <person name="Matsumoto T."/>
        </authorList>
    </citation>
    <scope>GENOME REANNOTATION</scope>
    <source>
        <strain>cv. Nipponbare</strain>
    </source>
</reference>
<reference key="5">
    <citation type="journal article" date="2000" name="Rice Genet. Newsl.">
        <title>ABERRANT PANICLE ORGANIZATION 1 gene regulates meristem identity in reproductive phase.</title>
        <authorList>
            <person name="Ikeda K."/>
            <person name="Nagasawa N."/>
            <person name="Nagato Y."/>
        </authorList>
    </citation>
    <scope>FUNCTION</scope>
    <scope>DISRUPTION PHENOTYPE</scope>
    <source>
        <strain>cv. Kinmaze</strain>
        <strain>cv. Taichung 65</strain>
    </source>
</reference>
<reference key="6">
    <citation type="journal article" date="2002" name="Rice Genet. Newsl.">
        <title>ABERRANT PANICLE ORGANIZATION 1 gene regulates the meristem organization in rice.</title>
        <authorList>
            <person name="Ikeda K."/>
            <person name="Nagasawa N."/>
            <person name="Nagato Y."/>
        </authorList>
    </citation>
    <scope>FUNCTION</scope>
    <scope>DISRUPTION PHENOTYPE</scope>
    <source>
        <strain>cv. Kinmaze</strain>
        <strain>cv. Taichung 65</strain>
    </source>
</reference>
<reference key="7">
    <citation type="journal article" date="2005" name="Dev. Biol.">
        <title>ABERRANT PANICLE ORGANIZATION 1 temporally regulates meristem identity in rice.</title>
        <authorList>
            <person name="Ikeda K."/>
            <person name="Nagasawa N."/>
            <person name="Nagato Y."/>
        </authorList>
    </citation>
    <scope>FUNCTION</scope>
    <scope>DISRUPTION PHENOTYPE</scope>
    <source>
        <strain>cv. Kinmaze</strain>
        <strain>cv. Taichung 65</strain>
    </source>
</reference>
<reference key="8">
    <citation type="journal article" date="2007" name="Plant Physiol.">
        <title>F-box proteins in rice. Genome-wide analysis, classification, temporal and spatial gene expression during panicle and seed development, and regulation by light and abiotic stress.</title>
        <authorList>
            <person name="Jain M."/>
            <person name="Nijhawan A."/>
            <person name="Arora R."/>
            <person name="Agarwal P."/>
            <person name="Ray S."/>
            <person name="Sharma P."/>
            <person name="Kapoor S."/>
            <person name="Tyagi A.K."/>
            <person name="Khurana J.P."/>
        </authorList>
    </citation>
    <scope>TISSUE SPECIFICITY</scope>
    <scope>GENE FAMILY</scope>
</reference>
<reference key="9">
    <citation type="journal article" date="2008" name="Plant Physiol.">
        <title>The F-box gene family is expanded in herbaceous annual plants relative to woody perennial plants.</title>
        <authorList>
            <person name="Yang X."/>
            <person name="Kalluri U.C."/>
            <person name="Jawdy S."/>
            <person name="Gunter L.E."/>
            <person name="Yin T."/>
            <person name="Tschaplinski T.J."/>
            <person name="Weston D.J."/>
            <person name="Ranjan P."/>
            <person name="Tuskan G.A."/>
        </authorList>
    </citation>
    <scope>GENE FAMILY</scope>
    <scope>NOMENCLATURE</scope>
</reference>
<reference key="10">
    <citation type="journal article" date="2009" name="Plant Physiol.">
        <title>Expression level of ABERRANT PANICLE ORGANIZATION1 determines rice inflorescence form through control of cell proliferation in the meristem.</title>
        <authorList>
            <person name="Ikeda-Kawakatsu K."/>
            <person name="Yasuno N."/>
            <person name="Oikawa T."/>
            <person name="Iida S."/>
            <person name="Nagato Y."/>
            <person name="Maekawa M."/>
            <person name="Kyozuka J."/>
        </authorList>
    </citation>
    <scope>FUNCTION</scope>
</reference>
<reference key="11">
    <citation type="journal article" date="2009" name="Proc. Natl. Acad. Sci. U.S.A.">
        <title>Evolution of F-box genes in plants: different modes of sequence divergence and their relationships with functional diversification.</title>
        <authorList>
            <person name="Xu G."/>
            <person name="Ma H."/>
            <person name="Nei M."/>
            <person name="Kong H."/>
        </authorList>
    </citation>
    <scope>GENE FAMILY</scope>
</reference>
<reference key="12">
    <citation type="journal article" date="2010" name="Nat. Commun.">
        <title>New approach for rice improvement using a pleiotropic QTL gene for lodging resistance and yield.</title>
        <authorList>
            <person name="Ookawa T."/>
            <person name="Hobo T."/>
            <person name="Yano M."/>
            <person name="Murata K."/>
            <person name="Ando T."/>
            <person name="Miura H."/>
            <person name="Asano K."/>
            <person name="Ochiai Y."/>
            <person name="Ikeda M."/>
            <person name="Nishitani R."/>
            <person name="Ebitani T."/>
            <person name="Ozaki H."/>
            <person name="Angeles E.R."/>
            <person name="Hirasawa T."/>
            <person name="Matsuoka M."/>
        </authorList>
    </citation>
    <scope>FUNCTION</scope>
    <source>
        <strain>cv. Koshihikari</strain>
        <strain>cv. Sasanishiki</strain>
    </source>
</reference>
<reference key="13">
    <citation type="journal article" date="2010" name="Theor. Appl. Genet.">
        <title>A gene controlling the number of primary rachis branches also controls the vascular bundle formation and hence is responsible to increase the harvest index and grain yield in rice.</title>
        <authorList>
            <person name="Terao T."/>
            <person name="Nagata K."/>
            <person name="Morino K."/>
            <person name="Hirose T."/>
        </authorList>
    </citation>
    <scope>FUNCTION</scope>
    <scope>DISRUPTION PHENOTYPE</scope>
    <scope>MUTAGENESIS OF SER-15; ILE-39; ARG-226; ARG-295 AND 315-GLY--GLY-317</scope>
    <scope>TISSUE SPECIFICITY</scope>
    <scope>DEVELOPMENTAL STAGE</scope>
    <source>
        <strain>cv. Sasanishiki</strain>
    </source>
</reference>
<reference key="14">
    <citation type="journal article" date="2011" name="PLoS ONE">
        <title>Phylogenetic comparison of F-Box (FBX) gene superfamily within the plant kingdom reveals divergent evolutionary histories indicative of genomic drift.</title>
        <authorList>
            <person name="Hua Z."/>
            <person name="Zou C."/>
            <person name="Shiu S.-H."/>
            <person name="Vierstra R.D."/>
        </authorList>
    </citation>
    <scope>GENE FAMILY</scope>
    <scope>NOMENCLATURE</scope>
</reference>
<reference key="15">
    <citation type="journal article" date="2011" name="Trends Plant Sci.">
        <title>The role of QTLs in the breeding of high-yielding rice.</title>
        <authorList>
            <person name="Miura K."/>
            <person name="Ashikari M."/>
            <person name="Matsuoka M."/>
        </authorList>
    </citation>
    <scope>REVIEW ON QTL</scope>
</reference>
<reference key="16">
    <citation type="journal article" date="2012" name="Plant J.">
        <title>ABERRANT PANICLE ORGANIZATION 2/RFL, the rice ortholog of Arabidopsis LEAFY, suppresses the transition from inflorescence meristem to floral meristem through interaction with APO1.</title>
        <authorList>
            <person name="Ikeda-Kawakatsu K."/>
            <person name="Maekawa M."/>
            <person name="Izawa T."/>
            <person name="Itoh J.-I."/>
            <person name="Nagato Y."/>
        </authorList>
    </citation>
    <scope>FUNCTION</scope>
    <scope>DISRUPTION PHENOTYPE</scope>
    <scope>INTERACTION WITH FL/APO2</scope>
</reference>
<reference key="17">
    <citation type="journal article" date="2013" name="Curr. Opin. Plant Biol.">
        <title>Genes offering the potential for designing yield-related traits in rice.</title>
        <authorList>
            <person name="Ikeda M."/>
            <person name="Miura K."/>
            <person name="Aya K."/>
            <person name="Kitano H."/>
            <person name="Matsuoka M."/>
        </authorList>
    </citation>
    <scope>REVIEW ON QTL</scope>
</reference>
<reference key="18">
    <citation type="journal article" date="2014" name="Gene">
        <title>Tillering and panicle branching genes in rice.</title>
        <authorList>
            <person name="Liang W.H."/>
            <person name="Shang F."/>
            <person name="Lin Q.T."/>
            <person name="Lou C."/>
            <person name="Zhang J."/>
        </authorList>
    </citation>
    <scope>REVIEW ON PANICLE BRANCHING GENES</scope>
</reference>
<reference key="19">
    <citation type="journal article" date="2014" name="Mol. Plant">
        <title>Isolation of a novel lodging resistance QTL gene involved in strigolactone signaling and its pyramiding with a QTL gene involved in another mechanism.</title>
        <authorList>
            <person name="Yano K."/>
            <person name="Ookawa T."/>
            <person name="Aya K."/>
            <person name="Ochiai Y."/>
            <person name="Hirasawa T."/>
            <person name="Ebitani T."/>
            <person name="Takarada T."/>
            <person name="Yano M."/>
            <person name="Yamamoto T."/>
            <person name="Fukuoka S."/>
            <person name="Wu J."/>
            <person name="Ando T."/>
            <person name="Ordonio R.L."/>
            <person name="Hirano K."/>
            <person name="Matsuoka M."/>
        </authorList>
    </citation>
    <scope>FUNCTION</scope>
</reference>
<reference key="20">
    <citation type="journal article" date="2015" name="PLoS ONE">
        <title>Ozone-induced rice grain yield loss is triggered via a change in panicle morphology that is controlled by ABERRANT PANICLE ORGANIZATION 1 gene.</title>
        <authorList>
            <person name="Tsukahara K."/>
            <person name="Sawada H."/>
            <person name="Kohno Y."/>
            <person name="Matsuura T."/>
            <person name="Mori I.C."/>
            <person name="Terao T."/>
            <person name="Ioki M."/>
            <person name="Tamaoki M."/>
        </authorList>
    </citation>
    <scope>FUNCTION</scope>
    <scope>INDUCTION BY OZONE</scope>
    <source>
        <strain>cv. Sasanishiki</strain>
    </source>
</reference>
<reference key="21">
    <citation type="journal article" date="2016" name="Rice">
        <title>Development and validation of allele-specific SNP/indel markers for eight yield-enhancing genes using whole-genome sequencing strategy to increase yield potential of rice, Oryza sativa L.</title>
        <authorList>
            <person name="Kim S.R."/>
            <person name="Ramos J."/>
            <person name="Ashikari M."/>
            <person name="Virk P.S."/>
            <person name="Torres E.A."/>
            <person name="Nissila E."/>
            <person name="Hechanova S.L."/>
            <person name="Mauleon R."/>
            <person name="Jena K.K."/>
        </authorList>
    </citation>
    <scope>REVIEW</scope>
</reference>
<evidence type="ECO:0000250" key="1">
    <source>
        <dbReference type="UniProtKB" id="Q39090"/>
    </source>
</evidence>
<evidence type="ECO:0000250" key="2">
    <source>
        <dbReference type="UniProtKB" id="Q8LEA8"/>
    </source>
</evidence>
<evidence type="ECO:0000255" key="3"/>
<evidence type="ECO:0000255" key="4">
    <source>
        <dbReference type="PROSITE-ProRule" id="PRU00080"/>
    </source>
</evidence>
<evidence type="ECO:0000256" key="5">
    <source>
        <dbReference type="SAM" id="MobiDB-lite"/>
    </source>
</evidence>
<evidence type="ECO:0000269" key="6">
    <source>
    </source>
</evidence>
<evidence type="ECO:0000269" key="7">
    <source>
    </source>
</evidence>
<evidence type="ECO:0000269" key="8">
    <source>
    </source>
</evidence>
<evidence type="ECO:0000269" key="9">
    <source>
    </source>
</evidence>
<evidence type="ECO:0000269" key="10">
    <source>
    </source>
</evidence>
<evidence type="ECO:0000269" key="11">
    <source>
    </source>
</evidence>
<evidence type="ECO:0000269" key="12">
    <source>
    </source>
</evidence>
<evidence type="ECO:0000269" key="13">
    <source>
    </source>
</evidence>
<evidence type="ECO:0000269" key="14">
    <source>
    </source>
</evidence>
<evidence type="ECO:0000269" key="15">
    <source ref="5"/>
</evidence>
<evidence type="ECO:0000269" key="16">
    <source ref="6"/>
</evidence>
<evidence type="ECO:0000303" key="17">
    <source>
    </source>
</evidence>
<evidence type="ECO:0000303" key="18">
    <source>
    </source>
</evidence>
<evidence type="ECO:0000303" key="19">
    <source>
    </source>
</evidence>
<evidence type="ECO:0000303" key="20">
    <source>
    </source>
</evidence>
<evidence type="ECO:0000303" key="21">
    <source>
    </source>
</evidence>
<evidence type="ECO:0000303" key="22">
    <source ref="5"/>
</evidence>
<evidence type="ECO:0000305" key="23"/>
<evidence type="ECO:0000312" key="24">
    <source>
        <dbReference type="EMBL" id="BAD45387.1"/>
    </source>
</evidence>
<evidence type="ECO:0000312" key="25">
    <source>
        <dbReference type="EMBL" id="BAS99029.1"/>
    </source>
</evidence>
<organism>
    <name type="scientific">Oryza sativa subsp. japonica</name>
    <name type="common">Rice</name>
    <dbReference type="NCBI Taxonomy" id="39947"/>
    <lineage>
        <taxon>Eukaryota</taxon>
        <taxon>Viridiplantae</taxon>
        <taxon>Streptophyta</taxon>
        <taxon>Embryophyta</taxon>
        <taxon>Tracheophyta</taxon>
        <taxon>Spermatophyta</taxon>
        <taxon>Magnoliopsida</taxon>
        <taxon>Liliopsida</taxon>
        <taxon>Poales</taxon>
        <taxon>Poaceae</taxon>
        <taxon>BOP clade</taxon>
        <taxon>Oryzoideae</taxon>
        <taxon>Oryzeae</taxon>
        <taxon>Oryzinae</taxon>
        <taxon>Oryza</taxon>
        <taxon>Oryza sativa</taxon>
    </lineage>
</organism>
<feature type="chain" id="PRO_0000447616" description="Protein ABERRANT PANICLE ORGANIZATION 1">
    <location>
        <begin position="1"/>
        <end position="429"/>
    </location>
</feature>
<feature type="transmembrane region" description="Helical" evidence="3">
    <location>
        <begin position="72"/>
        <end position="92"/>
    </location>
</feature>
<feature type="transmembrane region" description="Helical" evidence="3">
    <location>
        <begin position="112"/>
        <end position="132"/>
    </location>
</feature>
<feature type="domain" description="F-box" evidence="4">
    <location>
        <begin position="25"/>
        <end position="71"/>
    </location>
</feature>
<feature type="repeat" description="Kelch 1" evidence="3">
    <location>
        <begin position="229"/>
        <end position="277"/>
    </location>
</feature>
<feature type="repeat" description="Kelch 2" evidence="3">
    <location>
        <begin position="284"/>
        <end position="339"/>
    </location>
</feature>
<feature type="repeat" description="Kelch 3" evidence="3">
    <location>
        <begin position="350"/>
        <end position="397"/>
    </location>
</feature>
<feature type="region of interest" description="Disordered" evidence="5">
    <location>
        <begin position="1"/>
        <end position="21"/>
    </location>
</feature>
<feature type="compositionally biased region" description="Pro residues" evidence="5">
    <location>
        <begin position="1"/>
        <end position="11"/>
    </location>
</feature>
<feature type="mutagenesis site" description="In PBN6; bigger peduncle diameter due to larger vascular bundles, increased number of primary rachis branches (PRBs) and of the number of grains per panicle, thus leading to increased grain yield; when associated with V-39, G-226, C-295 and 315-G--G-317 DEL." evidence="10">
    <original>S</original>
    <variation>P</variation>
    <location>
        <position position="15"/>
    </location>
</feature>
<feature type="mutagenesis site" description="In PBN6; bigger peduncle diameter due to larger vascular bundles, increased number of primary rachis branches (PRBs) and of the number of grains per panicle, thus leading to increased grain yield; when associated with P-15, G-226, C-295 and 315-G--G-317 DEL." evidence="10">
    <original>I</original>
    <variation>V</variation>
    <location>
        <position position="39"/>
    </location>
</feature>
<feature type="mutagenesis site" description="In PBN6; bigger peduncle diameter due to larger vascular bundles, increased number of primary rachis branches (PRBs) and of the number of grains per panicle, thus leading to increased grain yield; when associated with P-15, V-39, G-226, C-295 and 315-G--G-317 DEL." evidence="10">
    <original>R</original>
    <variation>G</variation>
    <location>
        <position position="226"/>
    </location>
</feature>
<feature type="mutagenesis site" description="In PBN6; bigger peduncle diameter due to larger vascular bundles, increased number of primary rachis branches (PRBs) and of the number of grains per panicle, thus leading to increased grain yield; when associated with P-15, V-39, G-226 and 315-G--G-317 DEL." evidence="10">
    <original>R</original>
    <variation>C</variation>
    <location>
        <position position="295"/>
    </location>
</feature>
<feature type="mutagenesis site" description="In PBN6; bigger peduncle diameter due to larger vascular bundles, increased number of primary rachis branches (PRBs) and of the number of grains per panicle, thus leading to increased grain yield; when associated with P-15, V-39, G-226 and C-295." evidence="10">
    <location>
        <begin position="315"/>
        <end position="317"/>
    </location>
</feature>
<keyword id="KW-0010">Activator</keyword>
<keyword id="KW-0217">Developmental protein</keyword>
<keyword id="KW-0221">Differentiation</keyword>
<keyword id="KW-0287">Flowering</keyword>
<keyword id="KW-0880">Kelch repeat</keyword>
<keyword id="KW-0472">Membrane</keyword>
<keyword id="KW-1185">Reference proteome</keyword>
<keyword id="KW-0677">Repeat</keyword>
<keyword id="KW-0812">Transmembrane</keyword>
<keyword id="KW-1133">Transmembrane helix</keyword>
<keyword id="KW-0833">Ubl conjugation pathway</keyword>
<name>APO1_ORYSJ</name>